<organism>
    <name type="scientific">Latilactobacillus sakei subsp. sakei (strain 23K)</name>
    <name type="common">Lactobacillus sakei subsp. sakei</name>
    <dbReference type="NCBI Taxonomy" id="314315"/>
    <lineage>
        <taxon>Bacteria</taxon>
        <taxon>Bacillati</taxon>
        <taxon>Bacillota</taxon>
        <taxon>Bacilli</taxon>
        <taxon>Lactobacillales</taxon>
        <taxon>Lactobacillaceae</taxon>
        <taxon>Latilactobacillus</taxon>
    </lineage>
</organism>
<feature type="chain" id="PRO_0000224945" description="Small ribosomal subunit protein bS20">
    <location>
        <begin position="1"/>
        <end position="84"/>
    </location>
</feature>
<keyword id="KW-1185">Reference proteome</keyword>
<keyword id="KW-0687">Ribonucleoprotein</keyword>
<keyword id="KW-0689">Ribosomal protein</keyword>
<keyword id="KW-0694">RNA-binding</keyword>
<keyword id="KW-0699">rRNA-binding</keyword>
<comment type="function">
    <text evidence="1">Binds directly to 16S ribosomal RNA.</text>
</comment>
<comment type="similarity">
    <text evidence="1">Belongs to the bacterial ribosomal protein bS20 family.</text>
</comment>
<name>RS20_LATSS</name>
<evidence type="ECO:0000255" key="1">
    <source>
        <dbReference type="HAMAP-Rule" id="MF_00500"/>
    </source>
</evidence>
<evidence type="ECO:0000305" key="2"/>
<proteinExistence type="inferred from homology"/>
<gene>
    <name evidence="1" type="primary">rpsT</name>
    <name type="ordered locus">LCA_1067</name>
</gene>
<dbReference type="EMBL" id="CR936503">
    <property type="protein sequence ID" value="CAI55368.1"/>
    <property type="molecule type" value="Genomic_DNA"/>
</dbReference>
<dbReference type="RefSeq" id="WP_011374767.1">
    <property type="nucleotide sequence ID" value="NC_007576.1"/>
</dbReference>
<dbReference type="SMR" id="Q38WR3"/>
<dbReference type="STRING" id="314315.LCA_1067"/>
<dbReference type="GeneID" id="57133923"/>
<dbReference type="KEGG" id="lsa:LCA_1067"/>
<dbReference type="eggNOG" id="COG0268">
    <property type="taxonomic scope" value="Bacteria"/>
</dbReference>
<dbReference type="HOGENOM" id="CLU_160655_1_1_9"/>
<dbReference type="OrthoDB" id="9808392at2"/>
<dbReference type="Proteomes" id="UP000002707">
    <property type="component" value="Chromosome"/>
</dbReference>
<dbReference type="GO" id="GO:0005829">
    <property type="term" value="C:cytosol"/>
    <property type="evidence" value="ECO:0007669"/>
    <property type="project" value="TreeGrafter"/>
</dbReference>
<dbReference type="GO" id="GO:0015935">
    <property type="term" value="C:small ribosomal subunit"/>
    <property type="evidence" value="ECO:0007669"/>
    <property type="project" value="TreeGrafter"/>
</dbReference>
<dbReference type="GO" id="GO:0070181">
    <property type="term" value="F:small ribosomal subunit rRNA binding"/>
    <property type="evidence" value="ECO:0007669"/>
    <property type="project" value="TreeGrafter"/>
</dbReference>
<dbReference type="GO" id="GO:0003735">
    <property type="term" value="F:structural constituent of ribosome"/>
    <property type="evidence" value="ECO:0007669"/>
    <property type="project" value="InterPro"/>
</dbReference>
<dbReference type="GO" id="GO:0006412">
    <property type="term" value="P:translation"/>
    <property type="evidence" value="ECO:0007669"/>
    <property type="project" value="UniProtKB-UniRule"/>
</dbReference>
<dbReference type="Gene3D" id="1.20.58.110">
    <property type="entry name" value="Ribosomal protein S20"/>
    <property type="match status" value="1"/>
</dbReference>
<dbReference type="HAMAP" id="MF_00500">
    <property type="entry name" value="Ribosomal_bS20"/>
    <property type="match status" value="1"/>
</dbReference>
<dbReference type="InterPro" id="IPR002583">
    <property type="entry name" value="Ribosomal_bS20"/>
</dbReference>
<dbReference type="InterPro" id="IPR036510">
    <property type="entry name" value="Ribosomal_bS20_sf"/>
</dbReference>
<dbReference type="NCBIfam" id="TIGR00029">
    <property type="entry name" value="S20"/>
    <property type="match status" value="1"/>
</dbReference>
<dbReference type="PANTHER" id="PTHR33398">
    <property type="entry name" value="30S RIBOSOMAL PROTEIN S20"/>
    <property type="match status" value="1"/>
</dbReference>
<dbReference type="PANTHER" id="PTHR33398:SF1">
    <property type="entry name" value="SMALL RIBOSOMAL SUBUNIT PROTEIN BS20C"/>
    <property type="match status" value="1"/>
</dbReference>
<dbReference type="Pfam" id="PF01649">
    <property type="entry name" value="Ribosomal_S20p"/>
    <property type="match status" value="1"/>
</dbReference>
<dbReference type="SUPFAM" id="SSF46992">
    <property type="entry name" value="Ribosomal protein S20"/>
    <property type="match status" value="1"/>
</dbReference>
<reference key="1">
    <citation type="journal article" date="2005" name="Nat. Biotechnol.">
        <title>The complete genome sequence of the meat-borne lactic acid bacterium Lactobacillus sakei 23K.</title>
        <authorList>
            <person name="Chaillou S."/>
            <person name="Champomier-Verges M.-C."/>
            <person name="Cornet M."/>
            <person name="Crutz-Le Coq A.-M."/>
            <person name="Dudez A.-M."/>
            <person name="Martin V."/>
            <person name="Beaufils S."/>
            <person name="Darbon-Rongere E."/>
            <person name="Bossy R."/>
            <person name="Loux V."/>
            <person name="Zagorec M."/>
        </authorList>
    </citation>
    <scope>NUCLEOTIDE SEQUENCE [LARGE SCALE GENOMIC DNA]</scope>
    <source>
        <strain>23K</strain>
    </source>
</reference>
<accession>Q38WR3</accession>
<sequence>MPQIKSAMKRVKTIEKANNRNASQLSTMRSAIKKFKAAQAAGNEEAADLLKAATRAIDMASTKGLIHANKAGRDKSRLNKMMAK</sequence>
<protein>
    <recommendedName>
        <fullName evidence="1">Small ribosomal subunit protein bS20</fullName>
    </recommendedName>
    <alternativeName>
        <fullName evidence="2">30S ribosomal protein S20</fullName>
    </alternativeName>
</protein>